<evidence type="ECO:0000250" key="1"/>
<evidence type="ECO:0000255" key="2"/>
<evidence type="ECO:0000305" key="3"/>
<dbReference type="EMBL" id="AP009324">
    <property type="protein sequence ID" value="BAF77827.1"/>
    <property type="molecule type" value="Genomic_DNA"/>
</dbReference>
<dbReference type="RefSeq" id="WP_000573077.1">
    <property type="nucleotide sequence ID" value="NZ_CTYB01000024.1"/>
</dbReference>
<dbReference type="SMR" id="A7X0F9"/>
<dbReference type="KEGG" id="saw:SAHV_0944"/>
<dbReference type="HOGENOM" id="CLU_007100_9_2_9"/>
<dbReference type="GO" id="GO:0005886">
    <property type="term" value="C:plasma membrane"/>
    <property type="evidence" value="ECO:0007669"/>
    <property type="project" value="UniProtKB-SubCell"/>
</dbReference>
<dbReference type="GO" id="GO:0008137">
    <property type="term" value="F:NADH dehydrogenase (ubiquinone) activity"/>
    <property type="evidence" value="ECO:0007669"/>
    <property type="project" value="InterPro"/>
</dbReference>
<dbReference type="GO" id="GO:0015386">
    <property type="term" value="F:potassium:proton antiporter activity"/>
    <property type="evidence" value="ECO:0007669"/>
    <property type="project" value="InterPro"/>
</dbReference>
<dbReference type="GO" id="GO:0042773">
    <property type="term" value="P:ATP synthesis coupled electron transport"/>
    <property type="evidence" value="ECO:0007669"/>
    <property type="project" value="InterPro"/>
</dbReference>
<dbReference type="GO" id="GO:0006814">
    <property type="term" value="P:sodium ion transport"/>
    <property type="evidence" value="ECO:0007669"/>
    <property type="project" value="UniProtKB-KW"/>
</dbReference>
<dbReference type="InterPro" id="IPR050586">
    <property type="entry name" value="CPA3_Na-H_Antiporter_D"/>
</dbReference>
<dbReference type="InterPro" id="IPR004775">
    <property type="entry name" value="MnhD1"/>
</dbReference>
<dbReference type="InterPro" id="IPR003918">
    <property type="entry name" value="NADH_UbQ_OxRdtase"/>
</dbReference>
<dbReference type="InterPro" id="IPR001750">
    <property type="entry name" value="ND/Mrp_TM"/>
</dbReference>
<dbReference type="NCBIfam" id="TIGR00944">
    <property type="entry name" value="2a6301s04"/>
    <property type="match status" value="1"/>
</dbReference>
<dbReference type="NCBIfam" id="NF005818">
    <property type="entry name" value="PRK07691.1"/>
    <property type="match status" value="1"/>
</dbReference>
<dbReference type="PANTHER" id="PTHR42703:SF1">
    <property type="entry name" value="NA(+)_H(+) ANTIPORTER SUBUNIT D1"/>
    <property type="match status" value="1"/>
</dbReference>
<dbReference type="PANTHER" id="PTHR42703">
    <property type="entry name" value="NADH DEHYDROGENASE"/>
    <property type="match status" value="1"/>
</dbReference>
<dbReference type="Pfam" id="PF00361">
    <property type="entry name" value="Proton_antipo_M"/>
    <property type="match status" value="1"/>
</dbReference>
<dbReference type="PRINTS" id="PR01437">
    <property type="entry name" value="NUOXDRDTASE4"/>
</dbReference>
<organism>
    <name type="scientific">Staphylococcus aureus (strain Mu3 / ATCC 700698)</name>
    <dbReference type="NCBI Taxonomy" id="418127"/>
    <lineage>
        <taxon>Bacteria</taxon>
        <taxon>Bacillati</taxon>
        <taxon>Bacillota</taxon>
        <taxon>Bacilli</taxon>
        <taxon>Bacillales</taxon>
        <taxon>Staphylococcaceae</taxon>
        <taxon>Staphylococcus</taxon>
    </lineage>
</organism>
<feature type="chain" id="PRO_0000372132" description="Na(+)/H(+) antiporter subunit D1">
    <location>
        <begin position="1"/>
        <end position="498"/>
    </location>
</feature>
<feature type="transmembrane region" description="Helical" evidence="2">
    <location>
        <begin position="5"/>
        <end position="25"/>
    </location>
</feature>
<feature type="transmembrane region" description="Helical" evidence="2">
    <location>
        <begin position="34"/>
        <end position="54"/>
    </location>
</feature>
<feature type="transmembrane region" description="Helical" evidence="2">
    <location>
        <begin position="75"/>
        <end position="95"/>
    </location>
</feature>
<feature type="transmembrane region" description="Helical" evidence="2">
    <location>
        <begin position="109"/>
        <end position="129"/>
    </location>
</feature>
<feature type="transmembrane region" description="Helical" evidence="2">
    <location>
        <begin position="131"/>
        <end position="151"/>
    </location>
</feature>
<feature type="transmembrane region" description="Helical" evidence="2">
    <location>
        <begin position="169"/>
        <end position="189"/>
    </location>
</feature>
<feature type="transmembrane region" description="Helical" evidence="2">
    <location>
        <begin position="211"/>
        <end position="231"/>
    </location>
</feature>
<feature type="transmembrane region" description="Helical" evidence="2">
    <location>
        <begin position="241"/>
        <end position="261"/>
    </location>
</feature>
<feature type="transmembrane region" description="Helical" evidence="2">
    <location>
        <begin position="278"/>
        <end position="298"/>
    </location>
</feature>
<feature type="transmembrane region" description="Helical" evidence="2">
    <location>
        <begin position="303"/>
        <end position="323"/>
    </location>
</feature>
<feature type="transmembrane region" description="Helical" evidence="2">
    <location>
        <begin position="338"/>
        <end position="358"/>
    </location>
</feature>
<feature type="transmembrane region" description="Helical" evidence="2">
    <location>
        <begin position="373"/>
        <end position="393"/>
    </location>
</feature>
<feature type="transmembrane region" description="Helical" evidence="2">
    <location>
        <begin position="407"/>
        <end position="427"/>
    </location>
</feature>
<feature type="transmembrane region" description="Helical" evidence="2">
    <location>
        <begin position="455"/>
        <end position="475"/>
    </location>
</feature>
<comment type="function">
    <text evidence="1">Mnh complex is a Na(+)/H(+) antiporter involved in Na(+) excretion.</text>
</comment>
<comment type="subunit">
    <text evidence="1">May form a heterooligomeric complex that consists of seven subunits: mnhA1, mnhB1, mnhC1, mnhD1, mnhE1, mnhF1 and mnhG1.</text>
</comment>
<comment type="subcellular location">
    <subcellularLocation>
        <location evidence="3">Cell membrane</location>
        <topology evidence="3">Multi-pass membrane protein</topology>
    </subcellularLocation>
</comment>
<comment type="similarity">
    <text evidence="3">Belongs to the CPA3 antiporters (TC 2.A.63) subunit D family.</text>
</comment>
<reference key="1">
    <citation type="journal article" date="2008" name="Antimicrob. Agents Chemother.">
        <title>Mutated response regulator graR is responsible for phenotypic conversion of Staphylococcus aureus from heterogeneous vancomycin-intermediate resistance to vancomycin-intermediate resistance.</title>
        <authorList>
            <person name="Neoh H.-M."/>
            <person name="Cui L."/>
            <person name="Yuzawa H."/>
            <person name="Takeuchi F."/>
            <person name="Matsuo M."/>
            <person name="Hiramatsu K."/>
        </authorList>
    </citation>
    <scope>NUCLEOTIDE SEQUENCE [LARGE SCALE GENOMIC DNA]</scope>
    <source>
        <strain>Mu3 / ATCC 700698</strain>
    </source>
</reference>
<keyword id="KW-0050">Antiport</keyword>
<keyword id="KW-1003">Cell membrane</keyword>
<keyword id="KW-0375">Hydrogen ion transport</keyword>
<keyword id="KW-0406">Ion transport</keyword>
<keyword id="KW-0472">Membrane</keyword>
<keyword id="KW-0915">Sodium</keyword>
<keyword id="KW-0739">Sodium transport</keyword>
<keyword id="KW-0812">Transmembrane</keyword>
<keyword id="KW-1133">Transmembrane helix</keyword>
<keyword id="KW-0813">Transport</keyword>
<accession>A7X0F9</accession>
<protein>
    <recommendedName>
        <fullName>Na(+)/H(+) antiporter subunit D1</fullName>
    </recommendedName>
    <alternativeName>
        <fullName>Mnh complex subunit D1</fullName>
    </alternativeName>
</protein>
<name>MNHD1_STAA1</name>
<proteinExistence type="inferred from homology"/>
<sequence>MIESNMLVLTLVIPVITAILLVFIGKRPIIKRYVALGGTLLTLVAAIINLANVVKHGPIRVELGSWKAPYSIVFVLDIFSALLIITSIIITAIVILYSYQTIGIERERYYYYFSVLFMLIGIIGAFTTGDIFNLFVFFEVFLMSSYFLLVIGSTKIQLQETIKYVLVNVVSSSFFVMGVAILYSVVGTLNLADISNKLANLSAHDSGLVNIVFILFIFVFATKAGVFPMFVWLPSAYYAPPIPIIAFFGALLTKVGVYAIARTLSLFFSDNVSFSHYVILFLALLTIIFGCVGAVAYANIKKIILYNVMIAVGVILVGVAMMTESGMIGAIYYTLHDMLVKLALFLLIGIMIKITGTADLRQFGGLIKRYPVLGWSFFIAALSLAGIPPLSGFYGKFFIVQSTFERGFYLSGVIVLLSSLVVLYSVIRIFLQGFFGQPKGYDLNNKVDVKYLTTIAIVAVVITVLYGLSADYLYPMVKAGAETFYNPSTYVKAVLGGK</sequence>
<gene>
    <name type="primary">mnhD1</name>
    <name type="ordered locus">SAHV_0944</name>
</gene>